<reference key="1">
    <citation type="journal article" date="2009" name="J. Bacteriol.">
        <title>Genomic sequencing reveals regulatory mutations and recombinational events in the widely used MC4100 lineage of Escherichia coli K-12.</title>
        <authorList>
            <person name="Ferenci T."/>
            <person name="Zhou Z."/>
            <person name="Betteridge T."/>
            <person name="Ren Y."/>
            <person name="Liu Y."/>
            <person name="Feng L."/>
            <person name="Reeves P.R."/>
            <person name="Wang L."/>
        </authorList>
    </citation>
    <scope>NUCLEOTIDE SEQUENCE [LARGE SCALE GENOMIC DNA]</scope>
    <source>
        <strain>K12 / MC4100 / BW2952</strain>
    </source>
</reference>
<accession>C4ZZ69</accession>
<name>HEM3_ECOBW</name>
<evidence type="ECO:0000255" key="1">
    <source>
        <dbReference type="HAMAP-Rule" id="MF_00260"/>
    </source>
</evidence>
<protein>
    <recommendedName>
        <fullName evidence="1">Porphobilinogen deaminase</fullName>
        <shortName evidence="1">PBG</shortName>
        <ecNumber evidence="1">2.5.1.61</ecNumber>
    </recommendedName>
    <alternativeName>
        <fullName evidence="1">Hydroxymethylbilane synthase</fullName>
        <shortName evidence="1">HMBS</shortName>
    </alternativeName>
    <alternativeName>
        <fullName evidence="1">Pre-uroporphyrinogen synthase</fullName>
    </alternativeName>
</protein>
<comment type="function">
    <text evidence="1">Tetrapolymerization of the monopyrrole PBG into the hydroxymethylbilane pre-uroporphyrinogen in several discrete steps.</text>
</comment>
<comment type="catalytic activity">
    <reaction evidence="1">
        <text>4 porphobilinogen + H2O = hydroxymethylbilane + 4 NH4(+)</text>
        <dbReference type="Rhea" id="RHEA:13185"/>
        <dbReference type="ChEBI" id="CHEBI:15377"/>
        <dbReference type="ChEBI" id="CHEBI:28938"/>
        <dbReference type="ChEBI" id="CHEBI:57845"/>
        <dbReference type="ChEBI" id="CHEBI:58126"/>
        <dbReference type="EC" id="2.5.1.61"/>
    </reaction>
</comment>
<comment type="cofactor">
    <cofactor evidence="1">
        <name>dipyrromethane</name>
        <dbReference type="ChEBI" id="CHEBI:60342"/>
    </cofactor>
    <text evidence="1">Binds 1 dipyrromethane group covalently.</text>
</comment>
<comment type="pathway">
    <text evidence="1">Porphyrin-containing compound metabolism; protoporphyrin-IX biosynthesis; coproporphyrinogen-III from 5-aminolevulinate: step 2/4.</text>
</comment>
<comment type="subunit">
    <text evidence="1">Monomer.</text>
</comment>
<comment type="miscellaneous">
    <text evidence="1">The porphobilinogen subunits are added to the dipyrromethane group.</text>
</comment>
<comment type="similarity">
    <text evidence="1">Belongs to the HMBS family.</text>
</comment>
<gene>
    <name evidence="1" type="primary">hemC</name>
    <name type="ordered locus">BWG_3484</name>
</gene>
<keyword id="KW-0627">Porphyrin biosynthesis</keyword>
<keyword id="KW-0808">Transferase</keyword>
<feature type="chain" id="PRO_1000204650" description="Porphobilinogen deaminase">
    <location>
        <begin position="1"/>
        <end position="313"/>
    </location>
</feature>
<feature type="modified residue" description="S-(dipyrrolylmethanemethyl)cysteine" evidence="1">
    <location>
        <position position="242"/>
    </location>
</feature>
<sequence length="313" mass="33852">MLDNVLRIATRQSPLALWQAHYVKDKLMASHPGLVVELVPMVTRGDVILDTPLAKVGGKGLFVKELEVALLENRADIAVHSMKDVPVEFPQGLGLVTICEREDPRDAFVSNNYDSLDALPAGSIVGTSSLRRQCQLAERRPDLIIRSLRGNVGTRLSKLDNGEYDAIILAVAGLKRLGLESRIRAALPPEISLPAVGQGAVGIECRLDDSRTRELLAALNHHETALRVTAERAMNTRLEGGCQVPIGSYAELIDGEIWLRALVGAPDGSQIIRGERRGAPQDAEQMGISLAEELLNNGAREILAEVYNGDAPA</sequence>
<proteinExistence type="inferred from homology"/>
<dbReference type="EC" id="2.5.1.61" evidence="1"/>
<dbReference type="EMBL" id="CP001396">
    <property type="protein sequence ID" value="ACR63468.1"/>
    <property type="molecule type" value="Genomic_DNA"/>
</dbReference>
<dbReference type="RefSeq" id="WP_001338644.1">
    <property type="nucleotide sequence ID" value="NC_012759.1"/>
</dbReference>
<dbReference type="SMR" id="C4ZZ69"/>
<dbReference type="KEGG" id="ebw:BWG_3484"/>
<dbReference type="HOGENOM" id="CLU_019704_0_2_6"/>
<dbReference type="UniPathway" id="UPA00251">
    <property type="reaction ID" value="UER00319"/>
</dbReference>
<dbReference type="GO" id="GO:0005737">
    <property type="term" value="C:cytoplasm"/>
    <property type="evidence" value="ECO:0007669"/>
    <property type="project" value="TreeGrafter"/>
</dbReference>
<dbReference type="GO" id="GO:0004418">
    <property type="term" value="F:hydroxymethylbilane synthase activity"/>
    <property type="evidence" value="ECO:0007669"/>
    <property type="project" value="UniProtKB-UniRule"/>
</dbReference>
<dbReference type="GO" id="GO:0006782">
    <property type="term" value="P:protoporphyrinogen IX biosynthetic process"/>
    <property type="evidence" value="ECO:0007669"/>
    <property type="project" value="UniProtKB-UniRule"/>
</dbReference>
<dbReference type="CDD" id="cd13646">
    <property type="entry name" value="PBP2_EcHMBS_like"/>
    <property type="match status" value="1"/>
</dbReference>
<dbReference type="FunFam" id="3.30.160.40:FF:000002">
    <property type="entry name" value="Porphobilinogen deaminase"/>
    <property type="match status" value="1"/>
</dbReference>
<dbReference type="FunFam" id="3.40.190.10:FF:000004">
    <property type="entry name" value="Porphobilinogen deaminase"/>
    <property type="match status" value="1"/>
</dbReference>
<dbReference type="FunFam" id="3.40.190.10:FF:000005">
    <property type="entry name" value="Porphobilinogen deaminase"/>
    <property type="match status" value="1"/>
</dbReference>
<dbReference type="Gene3D" id="3.40.190.10">
    <property type="entry name" value="Periplasmic binding protein-like II"/>
    <property type="match status" value="2"/>
</dbReference>
<dbReference type="Gene3D" id="3.30.160.40">
    <property type="entry name" value="Porphobilinogen deaminase, C-terminal domain"/>
    <property type="match status" value="1"/>
</dbReference>
<dbReference type="HAMAP" id="MF_00260">
    <property type="entry name" value="Porphobil_deam"/>
    <property type="match status" value="1"/>
</dbReference>
<dbReference type="InterPro" id="IPR000860">
    <property type="entry name" value="HemC"/>
</dbReference>
<dbReference type="InterPro" id="IPR022419">
    <property type="entry name" value="Porphobilin_deaminase_cofac_BS"/>
</dbReference>
<dbReference type="InterPro" id="IPR022417">
    <property type="entry name" value="Porphobilin_deaminase_N"/>
</dbReference>
<dbReference type="InterPro" id="IPR022418">
    <property type="entry name" value="Porphobilinogen_deaminase_C"/>
</dbReference>
<dbReference type="InterPro" id="IPR036803">
    <property type="entry name" value="Porphobilinogen_deaminase_C_sf"/>
</dbReference>
<dbReference type="NCBIfam" id="TIGR00212">
    <property type="entry name" value="hemC"/>
    <property type="match status" value="1"/>
</dbReference>
<dbReference type="PANTHER" id="PTHR11557">
    <property type="entry name" value="PORPHOBILINOGEN DEAMINASE"/>
    <property type="match status" value="1"/>
</dbReference>
<dbReference type="PANTHER" id="PTHR11557:SF0">
    <property type="entry name" value="PORPHOBILINOGEN DEAMINASE"/>
    <property type="match status" value="1"/>
</dbReference>
<dbReference type="Pfam" id="PF01379">
    <property type="entry name" value="Porphobil_deam"/>
    <property type="match status" value="1"/>
</dbReference>
<dbReference type="Pfam" id="PF03900">
    <property type="entry name" value="Porphobil_deamC"/>
    <property type="match status" value="1"/>
</dbReference>
<dbReference type="PIRSF" id="PIRSF001438">
    <property type="entry name" value="4pyrrol_synth_OHMeBilane_synth"/>
    <property type="match status" value="1"/>
</dbReference>
<dbReference type="PRINTS" id="PR00151">
    <property type="entry name" value="PORPHBDMNASE"/>
</dbReference>
<dbReference type="SUPFAM" id="SSF53850">
    <property type="entry name" value="Periplasmic binding protein-like II"/>
    <property type="match status" value="1"/>
</dbReference>
<dbReference type="SUPFAM" id="SSF54782">
    <property type="entry name" value="Porphobilinogen deaminase (hydroxymethylbilane synthase), C-terminal domain"/>
    <property type="match status" value="1"/>
</dbReference>
<dbReference type="PROSITE" id="PS00533">
    <property type="entry name" value="PORPHOBILINOGEN_DEAM"/>
    <property type="match status" value="1"/>
</dbReference>
<organism>
    <name type="scientific">Escherichia coli (strain K12 / MC4100 / BW2952)</name>
    <dbReference type="NCBI Taxonomy" id="595496"/>
    <lineage>
        <taxon>Bacteria</taxon>
        <taxon>Pseudomonadati</taxon>
        <taxon>Pseudomonadota</taxon>
        <taxon>Gammaproteobacteria</taxon>
        <taxon>Enterobacterales</taxon>
        <taxon>Enterobacteriaceae</taxon>
        <taxon>Escherichia</taxon>
    </lineage>
</organism>